<accession>P41624</accession>
<comment type="function">
    <text evidence="1">One of the components of the core complex of photosystem II (PSII). It binds chlorophyll and helps catalyze the primary light-induced photochemical processes of PSII. PSII is a light-driven water:plastoquinone oxidoreductase, using light energy to abstract electrons from H(2)O, generating O(2) and a proton gradient subsequently used for ATP formation.</text>
</comment>
<comment type="cofactor">
    <text evidence="1">Binds multiple chlorophylls. PSII binds additional chlorophylls, carotenoids and specific lipids.</text>
</comment>
<comment type="subunit">
    <text evidence="1">PSII is composed of 1 copy each of membrane proteins PsbA, PsbB, PsbC, PsbD, PsbE, PsbF, PsbH, PsbI, PsbJ, PsbK, PsbL, PsbM, PsbT, PsbX, PsbY, PsbZ, Psb30/Ycf12, at least 3 peripheral proteins of the oxygen-evolving complex and a large number of cofactors. It forms dimeric complexes.</text>
</comment>
<comment type="subcellular location">
    <subcellularLocation>
        <location evidence="1">Plastid</location>
        <location evidence="1">Chloroplast thylakoid membrane</location>
        <topology evidence="1">Multi-pass membrane protein</topology>
    </subcellularLocation>
</comment>
<comment type="similarity">
    <text evidence="1">Belongs to the PsbB/PsbC family. PsbB subfamily.</text>
</comment>
<organism>
    <name type="scientific">Pinus thunbergii</name>
    <name type="common">Japanese black pine</name>
    <name type="synonym">Pinus thunbergiana</name>
    <dbReference type="NCBI Taxonomy" id="3350"/>
    <lineage>
        <taxon>Eukaryota</taxon>
        <taxon>Viridiplantae</taxon>
        <taxon>Streptophyta</taxon>
        <taxon>Embryophyta</taxon>
        <taxon>Tracheophyta</taxon>
        <taxon>Spermatophyta</taxon>
        <taxon>Pinopsida</taxon>
        <taxon>Pinidae</taxon>
        <taxon>Conifers I</taxon>
        <taxon>Pinales</taxon>
        <taxon>Pinaceae</taxon>
        <taxon>Pinus</taxon>
        <taxon>Pinus subgen. Pinus</taxon>
    </lineage>
</organism>
<keyword id="KW-0148">Chlorophyll</keyword>
<keyword id="KW-0150">Chloroplast</keyword>
<keyword id="KW-0157">Chromophore</keyword>
<keyword id="KW-0472">Membrane</keyword>
<keyword id="KW-0602">Photosynthesis</keyword>
<keyword id="KW-0604">Photosystem II</keyword>
<keyword id="KW-0934">Plastid</keyword>
<keyword id="KW-0793">Thylakoid</keyword>
<keyword id="KW-0812">Transmembrane</keyword>
<keyword id="KW-1133">Transmembrane helix</keyword>
<feature type="chain" id="PRO_0000077494" description="Photosystem II CP47 reaction center protein">
    <location>
        <begin position="1"/>
        <end position="508"/>
    </location>
</feature>
<feature type="transmembrane region" description="Helical" evidence="1">
    <location>
        <begin position="21"/>
        <end position="36"/>
    </location>
</feature>
<feature type="transmembrane region" description="Helical" evidence="1">
    <location>
        <begin position="101"/>
        <end position="115"/>
    </location>
</feature>
<feature type="transmembrane region" description="Helical" evidence="1">
    <location>
        <begin position="140"/>
        <end position="156"/>
    </location>
</feature>
<feature type="transmembrane region" description="Helical" evidence="1">
    <location>
        <begin position="203"/>
        <end position="218"/>
    </location>
</feature>
<feature type="transmembrane region" description="Helical" evidence="1">
    <location>
        <begin position="237"/>
        <end position="252"/>
    </location>
</feature>
<feature type="transmembrane region" description="Helical" evidence="1">
    <location>
        <begin position="457"/>
        <end position="472"/>
    </location>
</feature>
<sequence>MGLPWYRVHTVVLNDPGRLISVHIMHTALVAGWAGSMTLYELAVFDPSDPVLDPMWRQGMFVIPFMTRLGIKDSWSGWNITGETVINPGIWSYEGVAVAHIVFSGLCFLAAIWHWVYWDLDIFCDERTGKRCLDLPKVFGIHLFLSGVACFGFGAFHVTGLYGPGIWVSDPYGLTGKIQPVDPAWGAEGFDPFVPGGIASHHIAAGILGILAGLFHLSVRPPQRLYVGLRMGNIETVLSSSIAAVFFAAFIVAGTMWYGSATTPVELFGPTRYQWDQGYFQQEIDRRVRAGLAENLSLSEAWSKIPEKLAFYDYIGNNPAKGGLFRAGAMDNGDGIAVGWLGHPIFKDKEGNELFVRRMPTFFETFPVVLVDKEGIVKADVPFRRAESKYSVEQVGVTVEFYGGGLDRVSFGDPAIVKKYARRAQLGEIFELDRATLKSDGVFRSSPRGWFTFGHATFALLFFSGHIWHGARTLFRDVFAGIDSDLDDRIEFGAFQKLGDPTTKRQVV</sequence>
<evidence type="ECO:0000255" key="1">
    <source>
        <dbReference type="HAMAP-Rule" id="MF_01495"/>
    </source>
</evidence>
<geneLocation type="chloroplast"/>
<reference key="1">
    <citation type="journal article" date="1994" name="Proc. Natl. Acad. Sci. U.S.A.">
        <title>Loss of all ndh genes as determined by sequencing the entire chloroplast genome of the black pine Pinus thunbergii.</title>
        <authorList>
            <person name="Wakasugi T."/>
            <person name="Tsudzuki J."/>
            <person name="Ito S."/>
            <person name="Nakashima K."/>
            <person name="Tsudzuki T."/>
            <person name="Sugiura M."/>
        </authorList>
    </citation>
    <scope>NUCLEOTIDE SEQUENCE [LARGE SCALE GENOMIC DNA]</scope>
</reference>
<name>PSBB_PINTH</name>
<proteinExistence type="inferred from homology"/>
<protein>
    <recommendedName>
        <fullName evidence="1">Photosystem II CP47 reaction center protein</fullName>
    </recommendedName>
    <alternativeName>
        <fullName evidence="1">PSII 47 kDa protein</fullName>
    </alternativeName>
    <alternativeName>
        <fullName evidence="1">Protein CP-47</fullName>
    </alternativeName>
</protein>
<dbReference type="EMBL" id="D17510">
    <property type="protein sequence ID" value="BAA04386.1"/>
    <property type="molecule type" value="Genomic_DNA"/>
</dbReference>
<dbReference type="PIR" id="T07508">
    <property type="entry name" value="T07508"/>
</dbReference>
<dbReference type="RefSeq" id="NP_042429.1">
    <property type="nucleotide sequence ID" value="NC_001631.1"/>
</dbReference>
<dbReference type="SMR" id="P41624"/>
<dbReference type="GeneID" id="809029"/>
<dbReference type="GO" id="GO:0009535">
    <property type="term" value="C:chloroplast thylakoid membrane"/>
    <property type="evidence" value="ECO:0007669"/>
    <property type="project" value="UniProtKB-SubCell"/>
</dbReference>
<dbReference type="GO" id="GO:0009523">
    <property type="term" value="C:photosystem II"/>
    <property type="evidence" value="ECO:0007669"/>
    <property type="project" value="UniProtKB-KW"/>
</dbReference>
<dbReference type="GO" id="GO:0016168">
    <property type="term" value="F:chlorophyll binding"/>
    <property type="evidence" value="ECO:0007669"/>
    <property type="project" value="UniProtKB-UniRule"/>
</dbReference>
<dbReference type="GO" id="GO:0045156">
    <property type="term" value="F:electron transporter, transferring electrons within the cyclic electron transport pathway of photosynthesis activity"/>
    <property type="evidence" value="ECO:0007669"/>
    <property type="project" value="InterPro"/>
</dbReference>
<dbReference type="GO" id="GO:0009772">
    <property type="term" value="P:photosynthetic electron transport in photosystem II"/>
    <property type="evidence" value="ECO:0007669"/>
    <property type="project" value="InterPro"/>
</dbReference>
<dbReference type="FunFam" id="3.10.680.10:FF:000001">
    <property type="entry name" value="Photosystem II CP47 reaction center protein"/>
    <property type="match status" value="1"/>
</dbReference>
<dbReference type="Gene3D" id="3.10.680.10">
    <property type="entry name" value="Photosystem II CP47 reaction center protein"/>
    <property type="match status" value="1"/>
</dbReference>
<dbReference type="HAMAP" id="MF_01495">
    <property type="entry name" value="PSII_PsbB_CP47"/>
    <property type="match status" value="1"/>
</dbReference>
<dbReference type="InterPro" id="IPR000932">
    <property type="entry name" value="PS_antenna-like"/>
</dbReference>
<dbReference type="InterPro" id="IPR036001">
    <property type="entry name" value="PS_II_antenna-like_sf"/>
</dbReference>
<dbReference type="InterPro" id="IPR017486">
    <property type="entry name" value="PSII_PsbB"/>
</dbReference>
<dbReference type="NCBIfam" id="TIGR03039">
    <property type="entry name" value="PS_II_CP47"/>
    <property type="match status" value="1"/>
</dbReference>
<dbReference type="PANTHER" id="PTHR33180">
    <property type="entry name" value="PHOTOSYSTEM II CP43 REACTION CENTER PROTEIN"/>
    <property type="match status" value="1"/>
</dbReference>
<dbReference type="PANTHER" id="PTHR33180:SF37">
    <property type="entry name" value="PHOTOSYSTEM II CP43 REACTION CENTER PROTEIN"/>
    <property type="match status" value="1"/>
</dbReference>
<dbReference type="Pfam" id="PF00421">
    <property type="entry name" value="PSII"/>
    <property type="match status" value="1"/>
</dbReference>
<dbReference type="SUPFAM" id="SSF161077">
    <property type="entry name" value="Photosystem II antenna protein-like"/>
    <property type="match status" value="1"/>
</dbReference>
<gene>
    <name evidence="1" type="primary">psbB</name>
</gene>